<evidence type="ECO:0000255" key="1">
    <source>
        <dbReference type="HAMAP-Rule" id="MF_00079"/>
    </source>
</evidence>
<organism>
    <name type="scientific">Buchnera aphidicola subsp. Baizongia pistaciae (strain Bp)</name>
    <dbReference type="NCBI Taxonomy" id="224915"/>
    <lineage>
        <taxon>Bacteria</taxon>
        <taxon>Pseudomonadati</taxon>
        <taxon>Pseudomonadota</taxon>
        <taxon>Gammaproteobacteria</taxon>
        <taxon>Enterobacterales</taxon>
        <taxon>Erwiniaceae</taxon>
        <taxon>Buchnera</taxon>
    </lineage>
</organism>
<name>HIS1_BUCBP</name>
<comment type="function">
    <text evidence="1">Catalyzes the condensation of ATP and 5-phosphoribose 1-diphosphate to form N'-(5'-phosphoribosyl)-ATP (PR-ATP). Has a crucial role in the pathway because the rate of histidine biosynthesis seems to be controlled primarily by regulation of HisG enzymatic activity.</text>
</comment>
<comment type="catalytic activity">
    <reaction evidence="1">
        <text>1-(5-phospho-beta-D-ribosyl)-ATP + diphosphate = 5-phospho-alpha-D-ribose 1-diphosphate + ATP</text>
        <dbReference type="Rhea" id="RHEA:18473"/>
        <dbReference type="ChEBI" id="CHEBI:30616"/>
        <dbReference type="ChEBI" id="CHEBI:33019"/>
        <dbReference type="ChEBI" id="CHEBI:58017"/>
        <dbReference type="ChEBI" id="CHEBI:73183"/>
        <dbReference type="EC" id="2.4.2.17"/>
    </reaction>
</comment>
<comment type="cofactor">
    <cofactor evidence="1">
        <name>Mg(2+)</name>
        <dbReference type="ChEBI" id="CHEBI:18420"/>
    </cofactor>
</comment>
<comment type="activity regulation">
    <text evidence="1">Feedback inhibited by histidine.</text>
</comment>
<comment type="pathway">
    <text evidence="1">Amino-acid biosynthesis; L-histidine biosynthesis; L-histidine from 5-phospho-alpha-D-ribose 1-diphosphate: step 1/9.</text>
</comment>
<comment type="subunit">
    <text evidence="1">Equilibrium between an active dimeric form, an inactive hexameric form and higher aggregates. Interconversion between the various forms is largely reversible and is influenced by the natural substrates and inhibitors of the enzyme.</text>
</comment>
<comment type="subcellular location">
    <subcellularLocation>
        <location evidence="1">Cytoplasm</location>
    </subcellularLocation>
</comment>
<comment type="similarity">
    <text evidence="1">Belongs to the ATP phosphoribosyltransferase family. Long subfamily.</text>
</comment>
<feature type="chain" id="PRO_0000151835" description="ATP phosphoribosyltransferase">
    <location>
        <begin position="1"/>
        <end position="299"/>
    </location>
</feature>
<accession>P59453</accession>
<keyword id="KW-0028">Amino-acid biosynthesis</keyword>
<keyword id="KW-0067">ATP-binding</keyword>
<keyword id="KW-0963">Cytoplasm</keyword>
<keyword id="KW-0328">Glycosyltransferase</keyword>
<keyword id="KW-0368">Histidine biosynthesis</keyword>
<keyword id="KW-0460">Magnesium</keyword>
<keyword id="KW-0479">Metal-binding</keyword>
<keyword id="KW-0547">Nucleotide-binding</keyword>
<keyword id="KW-1185">Reference proteome</keyword>
<keyword id="KW-0808">Transferase</keyword>
<reference key="1">
    <citation type="journal article" date="2003" name="Proc. Natl. Acad. Sci. U.S.A.">
        <title>Reductive genome evolution in Buchnera aphidicola.</title>
        <authorList>
            <person name="van Ham R.C.H.J."/>
            <person name="Kamerbeek J."/>
            <person name="Palacios C."/>
            <person name="Rausell C."/>
            <person name="Abascal F."/>
            <person name="Bastolla U."/>
            <person name="Fernandez J.M."/>
            <person name="Jimenez L."/>
            <person name="Postigo M."/>
            <person name="Silva F.J."/>
            <person name="Tamames J."/>
            <person name="Viguera E."/>
            <person name="Latorre A."/>
            <person name="Valencia A."/>
            <person name="Moran F."/>
            <person name="Moya A."/>
        </authorList>
    </citation>
    <scope>NUCLEOTIDE SEQUENCE [LARGE SCALE GENOMIC DNA]</scope>
    <source>
        <strain>Bp</strain>
    </source>
</reference>
<proteinExistence type="inferred from homology"/>
<gene>
    <name evidence="1" type="primary">hisG</name>
    <name type="ordered locus">bbp_093</name>
</gene>
<sequence length="299" mass="33619">MISNNRLRIAMQKTGRLSDDSKDLLTRCGIKINLHKQKLIAFAENMPIDVMCVRDDDIPGLVMDKVVDIGIIGENVLEEEVLNRQVQLDNCSYTKLKRLDFGICRLSLAVPINIEYNNIHCLNHTRIATSYPHLLKRYCDKKKLTFKSCMLNGSVEVAPRAGLSDAICDLVSTGATLEANGLREVEVIFFSKACVICKTGFISLEKKNVIDKLMTRIQGVIKARESKYIMLHAPIEKLEKVMNLLHGAENPTILKLAGDNTRVAMHMVSSETLFWETMEKLKLLGASSILVLPIEKMME</sequence>
<protein>
    <recommendedName>
        <fullName evidence="1">ATP phosphoribosyltransferase</fullName>
        <shortName evidence="1">ATP-PRT</shortName>
        <shortName evidence="1">ATP-PRTase</shortName>
        <ecNumber evidence="1">2.4.2.17</ecNumber>
    </recommendedName>
</protein>
<dbReference type="EC" id="2.4.2.17" evidence="1"/>
<dbReference type="EMBL" id="AE016826">
    <property type="protein sequence ID" value="AAO26828.1"/>
    <property type="molecule type" value="Genomic_DNA"/>
</dbReference>
<dbReference type="RefSeq" id="WP_011091229.1">
    <property type="nucleotide sequence ID" value="NC_004545.1"/>
</dbReference>
<dbReference type="SMR" id="P59453"/>
<dbReference type="STRING" id="224915.bbp_093"/>
<dbReference type="KEGG" id="bab:bbp_093"/>
<dbReference type="eggNOG" id="COG0040">
    <property type="taxonomic scope" value="Bacteria"/>
</dbReference>
<dbReference type="HOGENOM" id="CLU_038115_1_0_6"/>
<dbReference type="OrthoDB" id="9801867at2"/>
<dbReference type="UniPathway" id="UPA00031">
    <property type="reaction ID" value="UER00006"/>
</dbReference>
<dbReference type="Proteomes" id="UP000000601">
    <property type="component" value="Chromosome"/>
</dbReference>
<dbReference type="GO" id="GO:0005737">
    <property type="term" value="C:cytoplasm"/>
    <property type="evidence" value="ECO:0007669"/>
    <property type="project" value="UniProtKB-SubCell"/>
</dbReference>
<dbReference type="GO" id="GO:0005524">
    <property type="term" value="F:ATP binding"/>
    <property type="evidence" value="ECO:0007669"/>
    <property type="project" value="UniProtKB-KW"/>
</dbReference>
<dbReference type="GO" id="GO:0003879">
    <property type="term" value="F:ATP phosphoribosyltransferase activity"/>
    <property type="evidence" value="ECO:0007669"/>
    <property type="project" value="UniProtKB-UniRule"/>
</dbReference>
<dbReference type="GO" id="GO:0000287">
    <property type="term" value="F:magnesium ion binding"/>
    <property type="evidence" value="ECO:0007669"/>
    <property type="project" value="UniProtKB-UniRule"/>
</dbReference>
<dbReference type="GO" id="GO:0000105">
    <property type="term" value="P:L-histidine biosynthetic process"/>
    <property type="evidence" value="ECO:0007669"/>
    <property type="project" value="UniProtKB-UniRule"/>
</dbReference>
<dbReference type="FunFam" id="3.30.70.120:FF:000002">
    <property type="entry name" value="ATP phosphoribosyltransferase"/>
    <property type="match status" value="1"/>
</dbReference>
<dbReference type="FunFam" id="3.40.190.10:FF:000008">
    <property type="entry name" value="ATP phosphoribosyltransferase"/>
    <property type="match status" value="1"/>
</dbReference>
<dbReference type="Gene3D" id="3.30.70.120">
    <property type="match status" value="1"/>
</dbReference>
<dbReference type="Gene3D" id="3.40.190.10">
    <property type="entry name" value="Periplasmic binding protein-like II"/>
    <property type="match status" value="2"/>
</dbReference>
<dbReference type="HAMAP" id="MF_00079">
    <property type="entry name" value="HisG_Long"/>
    <property type="match status" value="1"/>
</dbReference>
<dbReference type="InterPro" id="IPR020621">
    <property type="entry name" value="ATP-PRT_HisG_long"/>
</dbReference>
<dbReference type="InterPro" id="IPR013820">
    <property type="entry name" value="ATP_PRibTrfase_cat"/>
</dbReference>
<dbReference type="InterPro" id="IPR018198">
    <property type="entry name" value="ATP_PRibTrfase_CS"/>
</dbReference>
<dbReference type="InterPro" id="IPR001348">
    <property type="entry name" value="ATP_PRibTrfase_HisG"/>
</dbReference>
<dbReference type="InterPro" id="IPR013115">
    <property type="entry name" value="HisG_C"/>
</dbReference>
<dbReference type="InterPro" id="IPR011322">
    <property type="entry name" value="N-reg_PII-like_a/b"/>
</dbReference>
<dbReference type="InterPro" id="IPR015867">
    <property type="entry name" value="N-reg_PII/ATP_PRibTrfase_C"/>
</dbReference>
<dbReference type="NCBIfam" id="TIGR00070">
    <property type="entry name" value="hisG"/>
    <property type="match status" value="1"/>
</dbReference>
<dbReference type="NCBIfam" id="TIGR03455">
    <property type="entry name" value="HisG_C-term"/>
    <property type="match status" value="1"/>
</dbReference>
<dbReference type="PANTHER" id="PTHR21403:SF8">
    <property type="entry name" value="ATP PHOSPHORIBOSYLTRANSFERASE"/>
    <property type="match status" value="1"/>
</dbReference>
<dbReference type="PANTHER" id="PTHR21403">
    <property type="entry name" value="ATP PHOSPHORIBOSYLTRANSFERASE ATP-PRTASE"/>
    <property type="match status" value="1"/>
</dbReference>
<dbReference type="Pfam" id="PF01634">
    <property type="entry name" value="HisG"/>
    <property type="match status" value="1"/>
</dbReference>
<dbReference type="Pfam" id="PF08029">
    <property type="entry name" value="HisG_C"/>
    <property type="match status" value="1"/>
</dbReference>
<dbReference type="SUPFAM" id="SSF54913">
    <property type="entry name" value="GlnB-like"/>
    <property type="match status" value="1"/>
</dbReference>
<dbReference type="SUPFAM" id="SSF53850">
    <property type="entry name" value="Periplasmic binding protein-like II"/>
    <property type="match status" value="1"/>
</dbReference>
<dbReference type="PROSITE" id="PS01316">
    <property type="entry name" value="ATP_P_PHORIBOSYLTR"/>
    <property type="match status" value="1"/>
</dbReference>